<feature type="chain" id="PRO_0000101842" description="HVA22-like protein h">
    <location>
        <begin position="1"/>
        <end position="315"/>
    </location>
</feature>
<feature type="region of interest" description="Disordered" evidence="1">
    <location>
        <begin position="148"/>
        <end position="315"/>
    </location>
</feature>
<feature type="compositionally biased region" description="Polar residues" evidence="1">
    <location>
        <begin position="173"/>
        <end position="190"/>
    </location>
</feature>
<feature type="compositionally biased region" description="Pro residues" evidence="1">
    <location>
        <begin position="234"/>
        <end position="248"/>
    </location>
</feature>
<feature type="sequence conflict" description="In Ref. 4; AAM62576." evidence="2" ref="4">
    <original>R</original>
    <variation>K</variation>
    <location>
        <position position="8"/>
    </location>
</feature>
<feature type="sequence conflict" description="In Ref. 4; AAM62576." evidence="2" ref="4">
    <original>PPS</original>
    <variation>SPL</variation>
    <location>
        <begin position="245"/>
        <end position="247"/>
    </location>
</feature>
<protein>
    <recommendedName>
        <fullName>HVA22-like protein h</fullName>
        <shortName>AtHVA22h</shortName>
    </recommendedName>
</protein>
<dbReference type="EMBL" id="AC022472">
    <property type="protein sequence ID" value="AAF79917.1"/>
    <property type="status" value="ALT_INIT"/>
    <property type="molecule type" value="Genomic_DNA"/>
</dbReference>
<dbReference type="EMBL" id="CP002684">
    <property type="protein sequence ID" value="AEE29916.1"/>
    <property type="molecule type" value="Genomic_DNA"/>
</dbReference>
<dbReference type="EMBL" id="AY045614">
    <property type="protein sequence ID" value="AAK73972.1"/>
    <property type="molecule type" value="mRNA"/>
</dbReference>
<dbReference type="EMBL" id="BT001012">
    <property type="protein sequence ID" value="AAN46766.1"/>
    <property type="molecule type" value="mRNA"/>
</dbReference>
<dbReference type="EMBL" id="AY085345">
    <property type="protein sequence ID" value="AAM62576.1"/>
    <property type="molecule type" value="mRNA"/>
</dbReference>
<dbReference type="PIR" id="H86332">
    <property type="entry name" value="H86332"/>
</dbReference>
<dbReference type="RefSeq" id="NP_564100.1">
    <property type="nucleotide sequence ID" value="NM_101850.2"/>
</dbReference>
<dbReference type="STRING" id="3702.Q8LEM6"/>
<dbReference type="GlyGen" id="Q8LEM6">
    <property type="glycosylation" value="2 sites"/>
</dbReference>
<dbReference type="iPTMnet" id="Q8LEM6"/>
<dbReference type="PaxDb" id="3702-AT1G19950.1"/>
<dbReference type="ProteomicsDB" id="230124"/>
<dbReference type="EnsemblPlants" id="AT1G19950.1">
    <property type="protein sequence ID" value="AT1G19950.1"/>
    <property type="gene ID" value="AT1G19950"/>
</dbReference>
<dbReference type="GeneID" id="838584"/>
<dbReference type="Gramene" id="AT1G19950.1">
    <property type="protein sequence ID" value="AT1G19950.1"/>
    <property type="gene ID" value="AT1G19950"/>
</dbReference>
<dbReference type="KEGG" id="ath:AT1G19950"/>
<dbReference type="Araport" id="AT1G19950"/>
<dbReference type="TAIR" id="AT1G19950">
    <property type="gene designation" value="HVA22H"/>
</dbReference>
<dbReference type="eggNOG" id="KOG1726">
    <property type="taxonomic scope" value="Eukaryota"/>
</dbReference>
<dbReference type="HOGENOM" id="CLU_028431_5_0_1"/>
<dbReference type="InParanoid" id="Q8LEM6"/>
<dbReference type="OMA" id="CYKAIEK"/>
<dbReference type="PhylomeDB" id="Q8LEM6"/>
<dbReference type="PRO" id="PR:Q8LEM6"/>
<dbReference type="Proteomes" id="UP000006548">
    <property type="component" value="Chromosome 1"/>
</dbReference>
<dbReference type="ExpressionAtlas" id="Q8LEM6">
    <property type="expression patterns" value="baseline and differential"/>
</dbReference>
<dbReference type="InterPro" id="IPR004345">
    <property type="entry name" value="TB2_DP1_HVA22"/>
</dbReference>
<dbReference type="PANTHER" id="PTHR12300:SF113">
    <property type="entry name" value="HVA22-LIKE PROTEIN H"/>
    <property type="match status" value="1"/>
</dbReference>
<dbReference type="PANTHER" id="PTHR12300">
    <property type="entry name" value="HVA22-LIKE PROTEINS"/>
    <property type="match status" value="1"/>
</dbReference>
<dbReference type="Pfam" id="PF03134">
    <property type="entry name" value="TB2_DP1_HVA22"/>
    <property type="match status" value="1"/>
</dbReference>
<name>HA22H_ARATH</name>
<organism>
    <name type="scientific">Arabidopsis thaliana</name>
    <name type="common">Mouse-ear cress</name>
    <dbReference type="NCBI Taxonomy" id="3702"/>
    <lineage>
        <taxon>Eukaryota</taxon>
        <taxon>Viridiplantae</taxon>
        <taxon>Streptophyta</taxon>
        <taxon>Embryophyta</taxon>
        <taxon>Tracheophyta</taxon>
        <taxon>Spermatophyta</taxon>
        <taxon>Magnoliopsida</taxon>
        <taxon>eudicotyledons</taxon>
        <taxon>Gunneridae</taxon>
        <taxon>Pentapetalae</taxon>
        <taxon>rosids</taxon>
        <taxon>malvids</taxon>
        <taxon>Brassicales</taxon>
        <taxon>Brassicaceae</taxon>
        <taxon>Camelineae</taxon>
        <taxon>Arabidopsis</taxon>
    </lineage>
</organism>
<proteinExistence type="evidence at transcript level"/>
<evidence type="ECO:0000256" key="1">
    <source>
        <dbReference type="SAM" id="MobiDB-lite"/>
    </source>
</evidence>
<evidence type="ECO:0000305" key="2"/>
<keyword id="KW-1185">Reference proteome</keyword>
<gene>
    <name type="primary">HVA22H</name>
    <name type="ordered locus">At1g19950</name>
    <name type="ORF">T20H2.26</name>
</gene>
<reference key="1">
    <citation type="journal article" date="2000" name="Nature">
        <title>Sequence and analysis of chromosome 1 of the plant Arabidopsis thaliana.</title>
        <authorList>
            <person name="Theologis A."/>
            <person name="Ecker J.R."/>
            <person name="Palm C.J."/>
            <person name="Federspiel N.A."/>
            <person name="Kaul S."/>
            <person name="White O."/>
            <person name="Alonso J."/>
            <person name="Altafi H."/>
            <person name="Araujo R."/>
            <person name="Bowman C.L."/>
            <person name="Brooks S.Y."/>
            <person name="Buehler E."/>
            <person name="Chan A."/>
            <person name="Chao Q."/>
            <person name="Chen H."/>
            <person name="Cheuk R.F."/>
            <person name="Chin C.W."/>
            <person name="Chung M.K."/>
            <person name="Conn L."/>
            <person name="Conway A.B."/>
            <person name="Conway A.R."/>
            <person name="Creasy T.H."/>
            <person name="Dewar K."/>
            <person name="Dunn P."/>
            <person name="Etgu P."/>
            <person name="Feldblyum T.V."/>
            <person name="Feng J.-D."/>
            <person name="Fong B."/>
            <person name="Fujii C.Y."/>
            <person name="Gill J.E."/>
            <person name="Goldsmith A.D."/>
            <person name="Haas B."/>
            <person name="Hansen N.F."/>
            <person name="Hughes B."/>
            <person name="Huizar L."/>
            <person name="Hunter J.L."/>
            <person name="Jenkins J."/>
            <person name="Johnson-Hopson C."/>
            <person name="Khan S."/>
            <person name="Khaykin E."/>
            <person name="Kim C.J."/>
            <person name="Koo H.L."/>
            <person name="Kremenetskaia I."/>
            <person name="Kurtz D.B."/>
            <person name="Kwan A."/>
            <person name="Lam B."/>
            <person name="Langin-Hooper S."/>
            <person name="Lee A."/>
            <person name="Lee J.M."/>
            <person name="Lenz C.A."/>
            <person name="Li J.H."/>
            <person name="Li Y.-P."/>
            <person name="Lin X."/>
            <person name="Liu S.X."/>
            <person name="Liu Z.A."/>
            <person name="Luros J.S."/>
            <person name="Maiti R."/>
            <person name="Marziali A."/>
            <person name="Militscher J."/>
            <person name="Miranda M."/>
            <person name="Nguyen M."/>
            <person name="Nierman W.C."/>
            <person name="Osborne B.I."/>
            <person name="Pai G."/>
            <person name="Peterson J."/>
            <person name="Pham P.K."/>
            <person name="Rizzo M."/>
            <person name="Rooney T."/>
            <person name="Rowley D."/>
            <person name="Sakano H."/>
            <person name="Salzberg S.L."/>
            <person name="Schwartz J.R."/>
            <person name="Shinn P."/>
            <person name="Southwick A.M."/>
            <person name="Sun H."/>
            <person name="Tallon L.J."/>
            <person name="Tambunga G."/>
            <person name="Toriumi M.J."/>
            <person name="Town C.D."/>
            <person name="Utterback T."/>
            <person name="Van Aken S."/>
            <person name="Vaysberg M."/>
            <person name="Vysotskaia V.S."/>
            <person name="Walker M."/>
            <person name="Wu D."/>
            <person name="Yu G."/>
            <person name="Fraser C.M."/>
            <person name="Venter J.C."/>
            <person name="Davis R.W."/>
        </authorList>
    </citation>
    <scope>NUCLEOTIDE SEQUENCE [LARGE SCALE GENOMIC DNA]</scope>
    <source>
        <strain>cv. Columbia</strain>
    </source>
</reference>
<reference key="2">
    <citation type="journal article" date="2017" name="Plant J.">
        <title>Araport11: a complete reannotation of the Arabidopsis thaliana reference genome.</title>
        <authorList>
            <person name="Cheng C.Y."/>
            <person name="Krishnakumar V."/>
            <person name="Chan A.P."/>
            <person name="Thibaud-Nissen F."/>
            <person name="Schobel S."/>
            <person name="Town C.D."/>
        </authorList>
    </citation>
    <scope>GENOME REANNOTATION</scope>
    <source>
        <strain>cv. Columbia</strain>
    </source>
</reference>
<reference key="3">
    <citation type="journal article" date="2003" name="Science">
        <title>Empirical analysis of transcriptional activity in the Arabidopsis genome.</title>
        <authorList>
            <person name="Yamada K."/>
            <person name="Lim J."/>
            <person name="Dale J.M."/>
            <person name="Chen H."/>
            <person name="Shinn P."/>
            <person name="Palm C.J."/>
            <person name="Southwick A.M."/>
            <person name="Wu H.C."/>
            <person name="Kim C.J."/>
            <person name="Nguyen M."/>
            <person name="Pham P.K."/>
            <person name="Cheuk R.F."/>
            <person name="Karlin-Newmann G."/>
            <person name="Liu S.X."/>
            <person name="Lam B."/>
            <person name="Sakano H."/>
            <person name="Wu T."/>
            <person name="Yu G."/>
            <person name="Miranda M."/>
            <person name="Quach H.L."/>
            <person name="Tripp M."/>
            <person name="Chang C.H."/>
            <person name="Lee J.M."/>
            <person name="Toriumi M.J."/>
            <person name="Chan M.M."/>
            <person name="Tang C.C."/>
            <person name="Onodera C.S."/>
            <person name="Deng J.M."/>
            <person name="Akiyama K."/>
            <person name="Ansari Y."/>
            <person name="Arakawa T."/>
            <person name="Banh J."/>
            <person name="Banno F."/>
            <person name="Bowser L."/>
            <person name="Brooks S.Y."/>
            <person name="Carninci P."/>
            <person name="Chao Q."/>
            <person name="Choy N."/>
            <person name="Enju A."/>
            <person name="Goldsmith A.D."/>
            <person name="Gurjal M."/>
            <person name="Hansen N.F."/>
            <person name="Hayashizaki Y."/>
            <person name="Johnson-Hopson C."/>
            <person name="Hsuan V.W."/>
            <person name="Iida K."/>
            <person name="Karnes M."/>
            <person name="Khan S."/>
            <person name="Koesema E."/>
            <person name="Ishida J."/>
            <person name="Jiang P.X."/>
            <person name="Jones T."/>
            <person name="Kawai J."/>
            <person name="Kamiya A."/>
            <person name="Meyers C."/>
            <person name="Nakajima M."/>
            <person name="Narusaka M."/>
            <person name="Seki M."/>
            <person name="Sakurai T."/>
            <person name="Satou M."/>
            <person name="Tamse R."/>
            <person name="Vaysberg M."/>
            <person name="Wallender E.K."/>
            <person name="Wong C."/>
            <person name="Yamamura Y."/>
            <person name="Yuan S."/>
            <person name="Shinozaki K."/>
            <person name="Davis R.W."/>
            <person name="Theologis A."/>
            <person name="Ecker J.R."/>
        </authorList>
    </citation>
    <scope>NUCLEOTIDE SEQUENCE [LARGE SCALE MRNA]</scope>
    <source>
        <strain>cv. Columbia</strain>
    </source>
</reference>
<reference key="4">
    <citation type="submission" date="2002-03" db="EMBL/GenBank/DDBJ databases">
        <title>Full-length cDNA from Arabidopsis thaliana.</title>
        <authorList>
            <person name="Brover V.V."/>
            <person name="Troukhan M.E."/>
            <person name="Alexandrov N.A."/>
            <person name="Lu Y.-P."/>
            <person name="Flavell R.B."/>
            <person name="Feldmann K.A."/>
        </authorList>
    </citation>
    <scope>NUCLEOTIDE SEQUENCE [LARGE SCALE MRNA]</scope>
</reference>
<accession>Q8LEM6</accession>
<accession>Q94AY5</accession>
<accession>Q9LNS4</accession>
<comment type="similarity">
    <text evidence="2">Belongs to the DP1 family.</text>
</comment>
<comment type="sequence caution" evidence="2">
    <conflict type="erroneous initiation">
        <sequence resource="EMBL-CDS" id="AAF79917"/>
    </conflict>
</comment>
<sequence length="315" mass="35103">MIGSFLTRGLVMVFGYAYPAYECYKAVEKNKPEMQQLRFWCQYWILVAALTIFERVGDALASWVPLYCEAKLAFFIYLWFPKTRGTTYVYDSFFQPYVAKHENEIDRSLIELRTKAGDLAVIYCRKAVSYGQTRIVEILHFVALQSTPKPKPKEKKQAAAPEEEEQKQPDLKATSQAASSNPQVRLQSKKPQLVTKEPISPKPLSSPRKQQQLQTETKEAKASVSQTKLTTLTPPGPPPPPPPPPPSPTTAAKRNADPAQPSPTEAEEASQTVAALPEPASEIQRASSSKETIMEETLRITRGSLRKARSAGAPR</sequence>